<organism>
    <name type="scientific">Listeria welshimeri serovar 6b (strain ATCC 35897 / DSM 20650 / CCUG 15529 / CIP 8149 / NCTC 11857 / SLCC 5334 / V8)</name>
    <dbReference type="NCBI Taxonomy" id="386043"/>
    <lineage>
        <taxon>Bacteria</taxon>
        <taxon>Bacillati</taxon>
        <taxon>Bacillota</taxon>
        <taxon>Bacilli</taxon>
        <taxon>Bacillales</taxon>
        <taxon>Listeriaceae</taxon>
        <taxon>Listeria</taxon>
    </lineage>
</organism>
<evidence type="ECO:0000255" key="1">
    <source>
        <dbReference type="HAMAP-Rule" id="MF_00272"/>
    </source>
</evidence>
<evidence type="ECO:0000255" key="2">
    <source>
        <dbReference type="PROSITE-ProRule" id="PRU01066"/>
    </source>
</evidence>
<reference key="1">
    <citation type="journal article" date="2006" name="J. Bacteriol.">
        <title>Whole-genome sequence of Listeria welshimeri reveals common steps in genome reduction with Listeria innocua as compared to Listeria monocytogenes.</title>
        <authorList>
            <person name="Hain T."/>
            <person name="Steinweg C."/>
            <person name="Kuenne C.T."/>
            <person name="Billion A."/>
            <person name="Ghai R."/>
            <person name="Chatterjee S.S."/>
            <person name="Domann E."/>
            <person name="Kaerst U."/>
            <person name="Goesmann A."/>
            <person name="Bekel T."/>
            <person name="Bartels D."/>
            <person name="Kaiser O."/>
            <person name="Meyer F."/>
            <person name="Puehler A."/>
            <person name="Weisshaar B."/>
            <person name="Wehland J."/>
            <person name="Liang C."/>
            <person name="Dandekar T."/>
            <person name="Lampidis R."/>
            <person name="Kreft J."/>
            <person name="Goebel W."/>
            <person name="Chakraborty T."/>
        </authorList>
    </citation>
    <scope>NUCLEOTIDE SEQUENCE [LARGE SCALE GENOMIC DNA]</scope>
    <source>
        <strain>ATCC 35897 / DSM 20650 / CCUG 15529 / CIP 8149 / NCTC 11857 / SLCC 5334 / V8</strain>
    </source>
</reference>
<feature type="chain" id="PRO_0000302385" description="Glycine cleavage system H protein">
    <location>
        <begin position="1"/>
        <end position="125"/>
    </location>
</feature>
<feature type="domain" description="Lipoyl-binding" evidence="2">
    <location>
        <begin position="22"/>
        <end position="104"/>
    </location>
</feature>
<feature type="modified residue" description="N6-lipoyllysine" evidence="1">
    <location>
        <position position="63"/>
    </location>
</feature>
<name>GCSH_LISW6</name>
<dbReference type="EMBL" id="AM263198">
    <property type="protein sequence ID" value="CAK21790.1"/>
    <property type="molecule type" value="Genomic_DNA"/>
</dbReference>
<dbReference type="RefSeq" id="WP_011703113.1">
    <property type="nucleotide sequence ID" value="NC_008555.1"/>
</dbReference>
<dbReference type="SMR" id="A0ALA8"/>
<dbReference type="STRING" id="386043.lwe2372"/>
<dbReference type="GeneID" id="61190293"/>
<dbReference type="KEGG" id="lwe:lwe2372"/>
<dbReference type="eggNOG" id="COG0509">
    <property type="taxonomic scope" value="Bacteria"/>
</dbReference>
<dbReference type="HOGENOM" id="CLU_097408_2_0_9"/>
<dbReference type="OrthoDB" id="9796712at2"/>
<dbReference type="Proteomes" id="UP000000779">
    <property type="component" value="Chromosome"/>
</dbReference>
<dbReference type="GO" id="GO:0005829">
    <property type="term" value="C:cytosol"/>
    <property type="evidence" value="ECO:0007669"/>
    <property type="project" value="TreeGrafter"/>
</dbReference>
<dbReference type="GO" id="GO:0005960">
    <property type="term" value="C:glycine cleavage complex"/>
    <property type="evidence" value="ECO:0007669"/>
    <property type="project" value="InterPro"/>
</dbReference>
<dbReference type="GO" id="GO:0019464">
    <property type="term" value="P:glycine decarboxylation via glycine cleavage system"/>
    <property type="evidence" value="ECO:0007669"/>
    <property type="project" value="UniProtKB-UniRule"/>
</dbReference>
<dbReference type="CDD" id="cd06848">
    <property type="entry name" value="GCS_H"/>
    <property type="match status" value="1"/>
</dbReference>
<dbReference type="Gene3D" id="2.40.50.100">
    <property type="match status" value="1"/>
</dbReference>
<dbReference type="HAMAP" id="MF_00272">
    <property type="entry name" value="GcvH"/>
    <property type="match status" value="1"/>
</dbReference>
<dbReference type="InterPro" id="IPR003016">
    <property type="entry name" value="2-oxoA_DH_lipoyl-BS"/>
</dbReference>
<dbReference type="InterPro" id="IPR000089">
    <property type="entry name" value="Biotin_lipoyl"/>
</dbReference>
<dbReference type="InterPro" id="IPR002930">
    <property type="entry name" value="GCV_H"/>
</dbReference>
<dbReference type="InterPro" id="IPR033753">
    <property type="entry name" value="GCV_H/Fam206"/>
</dbReference>
<dbReference type="InterPro" id="IPR017453">
    <property type="entry name" value="GCV_H_sub"/>
</dbReference>
<dbReference type="InterPro" id="IPR011053">
    <property type="entry name" value="Single_hybrid_motif"/>
</dbReference>
<dbReference type="NCBIfam" id="TIGR00527">
    <property type="entry name" value="gcvH"/>
    <property type="match status" value="1"/>
</dbReference>
<dbReference type="NCBIfam" id="NF002270">
    <property type="entry name" value="PRK01202.1"/>
    <property type="match status" value="1"/>
</dbReference>
<dbReference type="PANTHER" id="PTHR11715">
    <property type="entry name" value="GLYCINE CLEAVAGE SYSTEM H PROTEIN"/>
    <property type="match status" value="1"/>
</dbReference>
<dbReference type="PANTHER" id="PTHR11715:SF3">
    <property type="entry name" value="GLYCINE CLEAVAGE SYSTEM H PROTEIN-RELATED"/>
    <property type="match status" value="1"/>
</dbReference>
<dbReference type="Pfam" id="PF01597">
    <property type="entry name" value="GCV_H"/>
    <property type="match status" value="1"/>
</dbReference>
<dbReference type="SUPFAM" id="SSF51230">
    <property type="entry name" value="Single hybrid motif"/>
    <property type="match status" value="1"/>
</dbReference>
<dbReference type="PROSITE" id="PS50968">
    <property type="entry name" value="BIOTINYL_LIPOYL"/>
    <property type="match status" value="1"/>
</dbReference>
<dbReference type="PROSITE" id="PS00189">
    <property type="entry name" value="LIPOYL"/>
    <property type="match status" value="1"/>
</dbReference>
<protein>
    <recommendedName>
        <fullName evidence="1">Glycine cleavage system H protein</fullName>
    </recommendedName>
    <alternativeName>
        <fullName evidence="1">Octanoyl/lipoyl carrier protein</fullName>
    </alternativeName>
</protein>
<gene>
    <name evidence="1" type="primary">gcvH</name>
    <name type="ordered locus">lwe2372</name>
</gene>
<comment type="function">
    <text evidence="1">The glycine cleavage system catalyzes the degradation of glycine. The H protein shuttles the methylamine group of glycine from the P protein to the T protein.</text>
</comment>
<comment type="function">
    <text evidence="1">Is also involved in protein lipoylation via its role as an octanoyl/lipoyl carrier protein intermediate.</text>
</comment>
<comment type="cofactor">
    <cofactor evidence="1">
        <name>(R)-lipoate</name>
        <dbReference type="ChEBI" id="CHEBI:83088"/>
    </cofactor>
    <text evidence="1">Binds 1 lipoyl cofactor covalently.</text>
</comment>
<comment type="subunit">
    <text evidence="1">The glycine cleavage system is composed of four proteins: P, T, L and H.</text>
</comment>
<comment type="similarity">
    <text evidence="1">Belongs to the GcvH family.</text>
</comment>
<keyword id="KW-0450">Lipoyl</keyword>
<sequence>MSLPKDLLYTEEHEWVKADDGSYIIGITDFAQDQLGDIVFVELPEVGDTVTKGDSIGSIESVKTVSDFYAPVTGKVVAVNETLEDEPELINSNPYDTGWILKLTEVEEADVTALLSSDDYEKGLD</sequence>
<proteinExistence type="inferred from homology"/>
<accession>A0ALA8</accession>